<proteinExistence type="inferred from homology"/>
<accession>B0B923</accession>
<accession>O84802</accession>
<accession>Q46371</accession>
<organism>
    <name type="scientific">Chlamydia trachomatis serovar L2 (strain ATCC VR-902B / DSM 19102 / 434/Bu)</name>
    <dbReference type="NCBI Taxonomy" id="471472"/>
    <lineage>
        <taxon>Bacteria</taxon>
        <taxon>Pseudomonadati</taxon>
        <taxon>Chlamydiota</taxon>
        <taxon>Chlamydiia</taxon>
        <taxon>Chlamydiales</taxon>
        <taxon>Chlamydiaceae</taxon>
        <taxon>Chlamydia/Chlamydophila group</taxon>
        <taxon>Chlamydia</taxon>
    </lineage>
</organism>
<comment type="catalytic activity">
    <reaction>
        <text>tRNA(Gly) + glycine + ATP = glycyl-tRNA(Gly) + AMP + diphosphate</text>
        <dbReference type="Rhea" id="RHEA:16013"/>
        <dbReference type="Rhea" id="RHEA-COMP:9664"/>
        <dbReference type="Rhea" id="RHEA-COMP:9683"/>
        <dbReference type="ChEBI" id="CHEBI:30616"/>
        <dbReference type="ChEBI" id="CHEBI:33019"/>
        <dbReference type="ChEBI" id="CHEBI:57305"/>
        <dbReference type="ChEBI" id="CHEBI:78442"/>
        <dbReference type="ChEBI" id="CHEBI:78522"/>
        <dbReference type="ChEBI" id="CHEBI:456215"/>
        <dbReference type="EC" id="6.1.1.14"/>
    </reaction>
</comment>
<comment type="subcellular location">
    <subcellularLocation>
        <location evidence="1">Cytoplasm</location>
    </subcellularLocation>
</comment>
<comment type="similarity">
    <text evidence="2">Belongs to the class-II aminoacyl-tRNA synthetase family.</text>
</comment>
<dbReference type="EC" id="6.1.1.14"/>
<dbReference type="EMBL" id="U20547">
    <property type="protein sequence ID" value="AAA82982.1"/>
    <property type="molecule type" value="Genomic_DNA"/>
</dbReference>
<dbReference type="EMBL" id="AM884176">
    <property type="protein sequence ID" value="CAP03610.1"/>
    <property type="molecule type" value="Genomic_DNA"/>
</dbReference>
<dbReference type="RefSeq" id="WP_009873412.1">
    <property type="nucleotide sequence ID" value="NC_010287.1"/>
</dbReference>
<dbReference type="RefSeq" id="YP_001654256.1">
    <property type="nucleotide sequence ID" value="NC_010287.1"/>
</dbReference>
<dbReference type="SMR" id="B0B923"/>
<dbReference type="KEGG" id="ctb:CTL0165"/>
<dbReference type="PATRIC" id="fig|471472.4.peg.178"/>
<dbReference type="HOGENOM" id="CLU_007220_1_1_0"/>
<dbReference type="Proteomes" id="UP001154402">
    <property type="component" value="Chromosome"/>
</dbReference>
<dbReference type="GO" id="GO:0005829">
    <property type="term" value="C:cytosol"/>
    <property type="evidence" value="ECO:0007669"/>
    <property type="project" value="TreeGrafter"/>
</dbReference>
<dbReference type="GO" id="GO:0004814">
    <property type="term" value="F:arginine-tRNA ligase activity"/>
    <property type="evidence" value="ECO:0007669"/>
    <property type="project" value="InterPro"/>
</dbReference>
<dbReference type="GO" id="GO:0005524">
    <property type="term" value="F:ATP binding"/>
    <property type="evidence" value="ECO:0007669"/>
    <property type="project" value="UniProtKB-UniRule"/>
</dbReference>
<dbReference type="GO" id="GO:0004820">
    <property type="term" value="F:glycine-tRNA ligase activity"/>
    <property type="evidence" value="ECO:0007669"/>
    <property type="project" value="UniProtKB-UniRule"/>
</dbReference>
<dbReference type="GO" id="GO:0006420">
    <property type="term" value="P:arginyl-tRNA aminoacylation"/>
    <property type="evidence" value="ECO:0007669"/>
    <property type="project" value="InterPro"/>
</dbReference>
<dbReference type="GO" id="GO:0006426">
    <property type="term" value="P:glycyl-tRNA aminoacylation"/>
    <property type="evidence" value="ECO:0007669"/>
    <property type="project" value="UniProtKB-UniRule"/>
</dbReference>
<dbReference type="CDD" id="cd00733">
    <property type="entry name" value="GlyRS_alpha_core"/>
    <property type="match status" value="1"/>
</dbReference>
<dbReference type="FunFam" id="3.30.930.10:FF:000006">
    <property type="entry name" value="Glycine--tRNA ligase alpha subunit"/>
    <property type="match status" value="1"/>
</dbReference>
<dbReference type="Gene3D" id="3.30.930.10">
    <property type="entry name" value="Bira Bifunctional Protein, Domain 2"/>
    <property type="match status" value="1"/>
</dbReference>
<dbReference type="Gene3D" id="1.20.58.180">
    <property type="entry name" value="Class II aaRS and biotin synthetases, domain 2"/>
    <property type="match status" value="1"/>
</dbReference>
<dbReference type="HAMAP" id="MF_00254">
    <property type="entry name" value="Gly_tRNA_synth_alpha"/>
    <property type="match status" value="1"/>
</dbReference>
<dbReference type="HAMAP" id="MF_00255">
    <property type="entry name" value="Gly_tRNA_synth_beta"/>
    <property type="match status" value="1"/>
</dbReference>
<dbReference type="InterPro" id="IPR045864">
    <property type="entry name" value="aa-tRNA-synth_II/BPL/LPL"/>
</dbReference>
<dbReference type="InterPro" id="IPR008909">
    <property type="entry name" value="DALR_anticod-bd"/>
</dbReference>
<dbReference type="InterPro" id="IPR015944">
    <property type="entry name" value="Gly-tRNA-synth_bsu"/>
</dbReference>
<dbReference type="InterPro" id="IPR006194">
    <property type="entry name" value="Gly-tRNA-synth_heterodimer"/>
</dbReference>
<dbReference type="InterPro" id="IPR002310">
    <property type="entry name" value="Gly-tRNA_ligase_asu"/>
</dbReference>
<dbReference type="NCBIfam" id="TIGR00388">
    <property type="entry name" value="glyQ"/>
    <property type="match status" value="1"/>
</dbReference>
<dbReference type="NCBIfam" id="TIGR00211">
    <property type="entry name" value="glyS"/>
    <property type="match status" value="1"/>
</dbReference>
<dbReference type="NCBIfam" id="NF006827">
    <property type="entry name" value="PRK09348.1"/>
    <property type="match status" value="1"/>
</dbReference>
<dbReference type="NCBIfam" id="NF011499">
    <property type="entry name" value="PRK14908.1"/>
    <property type="match status" value="1"/>
</dbReference>
<dbReference type="PANTHER" id="PTHR30075:SF2">
    <property type="entry name" value="GLYCINE--TRNA LIGASE, CHLOROPLASTIC_MITOCHONDRIAL 2"/>
    <property type="match status" value="1"/>
</dbReference>
<dbReference type="PANTHER" id="PTHR30075">
    <property type="entry name" value="GLYCYL-TRNA SYNTHETASE"/>
    <property type="match status" value="1"/>
</dbReference>
<dbReference type="Pfam" id="PF05746">
    <property type="entry name" value="DALR_1"/>
    <property type="match status" value="1"/>
</dbReference>
<dbReference type="Pfam" id="PF02091">
    <property type="entry name" value="tRNA-synt_2e"/>
    <property type="match status" value="1"/>
</dbReference>
<dbReference type="Pfam" id="PF02092">
    <property type="entry name" value="tRNA_synt_2f"/>
    <property type="match status" value="1"/>
</dbReference>
<dbReference type="PRINTS" id="PR01044">
    <property type="entry name" value="TRNASYNTHGA"/>
</dbReference>
<dbReference type="SUPFAM" id="SSF55681">
    <property type="entry name" value="Class II aaRS and biotin synthetases"/>
    <property type="match status" value="1"/>
</dbReference>
<dbReference type="PROSITE" id="PS50861">
    <property type="entry name" value="AA_TRNA_LIGASE_II_GLYAB"/>
    <property type="match status" value="2"/>
</dbReference>
<feature type="chain" id="PRO_0000391805" description="Glycine--tRNA ligase">
    <location>
        <begin position="1"/>
        <end position="1003"/>
    </location>
</feature>
<feature type="region of interest" description="Glycine--tRNA ligase alpha subunit">
    <location>
        <begin position="1"/>
        <end position="310"/>
    </location>
</feature>
<feature type="region of interest" description="Glycine--tRNA ligase beta subunit">
    <location>
        <begin position="311"/>
        <end position="1003"/>
    </location>
</feature>
<feature type="sequence conflict" description="In Ref. 1; AAA82982." evidence="2" ref="1">
    <original>F</original>
    <variation>S</variation>
    <location>
        <position position="221"/>
    </location>
</feature>
<feature type="sequence conflict" description="In Ref. 1; AAA82982." evidence="2" ref="1">
    <original>QRYFPTQNMQGEITNRF</original>
    <variation>PTVLPNTKYARRNHQSI</variation>
    <location>
        <begin position="602"/>
        <end position="618"/>
    </location>
</feature>
<feature type="sequence conflict" description="In Ref. 1; AAA82982." evidence="2" ref="1">
    <original>T</original>
    <variation>P</variation>
    <location>
        <position position="704"/>
    </location>
</feature>
<feature type="sequence conflict" description="In Ref. 1; AAA82982." evidence="2" ref="1">
    <original>S</original>
    <variation>SARFAS</variation>
    <location>
        <position position="828"/>
    </location>
</feature>
<evidence type="ECO:0000250" key="1"/>
<evidence type="ECO:0000305" key="2"/>
<reference key="1">
    <citation type="journal article" date="1995" name="J. Bacteriol.">
        <title>The glycyl-tRNA synthetase of Chlamydia trachomatis.</title>
        <authorList>
            <person name="Wagar E.A."/>
            <person name="Giese M.J."/>
            <person name="Yasin B."/>
            <person name="Pang M."/>
        </authorList>
    </citation>
    <scope>NUCLEOTIDE SEQUENCE [GENOMIC DNA]</scope>
</reference>
<reference key="2">
    <citation type="journal article" date="2008" name="Genome Res.">
        <title>Chlamydia trachomatis: genome sequence analysis of lymphogranuloma venereum isolates.</title>
        <authorList>
            <person name="Thomson N.R."/>
            <person name="Holden M.T.G."/>
            <person name="Carder C."/>
            <person name="Lennard N."/>
            <person name="Lockey S.J."/>
            <person name="Marsh P."/>
            <person name="Skipp P."/>
            <person name="O'Connor C.D."/>
            <person name="Goodhead I."/>
            <person name="Norbertzcak H."/>
            <person name="Harris B."/>
            <person name="Ormond D."/>
            <person name="Rance R."/>
            <person name="Quail M.A."/>
            <person name="Parkhill J."/>
            <person name="Stephens R.S."/>
            <person name="Clarke I.N."/>
        </authorList>
    </citation>
    <scope>NUCLEOTIDE SEQUENCE [LARGE SCALE GENOMIC DNA]</scope>
    <source>
        <strain>ATCC VR-902B / DSM 19102 / 434/Bu</strain>
    </source>
</reference>
<name>SYG_CHLT2</name>
<protein>
    <recommendedName>
        <fullName>Glycine--tRNA ligase</fullName>
    </recommendedName>
    <alternativeName>
        <fullName>Glycyl-tRNA synthetase</fullName>
        <shortName>GlyRS</shortName>
        <ecNumber>6.1.1.14</ecNumber>
    </alternativeName>
    <domain>
        <recommendedName>
            <fullName>Glycine--tRNA ligase alpha subunit</fullName>
        </recommendedName>
        <alternativeName>
            <fullName>Glycyl-tRNA synthetase alpha subunit</fullName>
        </alternativeName>
    </domain>
    <domain>
        <recommendedName>
            <fullName>Glycine--tRNA ligase beta subunit</fullName>
        </recommendedName>
        <alternativeName>
            <fullName>Glycyl-tRNA synthetase beta subunit</fullName>
        </alternativeName>
    </domain>
</protein>
<sequence>MSSQPLTLQAMMAAILNFWSEQGCIIHQGYDLEVGAGTFNPATFLQSLGPEPFRTAYIEPSRRPQDGRYGQHPNRLQKYHQLQVILKPVPENFLSLYLESLKVIGLNLVDHDIRFVHDDWENPTIGAWGLGWEVWLNGMEITQLTYFQAVGSKPLDAISGEITYGVERIAMYLQKKNSVYDVMWNGSLTYGDITQYAEQAWSQYNFETANTTMWLKHFDDFSAEALATLDQGLPLPAYDFVIKASHAFNMLDSRGVISVTERTRYIAKIRQLARAAADKYVAWRESLGFPLLKTPPSTPTVTPKKIPTICQPEDFLLEIGSEELPATFVPTGIQQLESLAKKLLADHGIAYKHLEVLGTPRRLALCIEGLSHVTIRPESEKKGPPLSLLFMTDGSVSPQGEQFFPSHGLSISHRSALDQPSAICRVRSINGTDYLFLVIPEERKETAAILVNELPQLIRSIRFPQKMTWDNGGVEYARPIRWLVALYGDQILPISLGFVSSGNTSWGHRQLDNRQLTIPSSNMYVDTLRSACVIVSQKERRAIIKQGLQNLTGDQIVAIAPEHLVDETVFLTEHPFVISAQFDPAFCSLPKELLIAEMIQHQRYFPTQNMQGEITNRFLIVCDNSPTDSIVEGNEKALAPRLTDGNFLFKQDLLTPLSSFVEKLKSVTYFESLGSLADKTSRLKLHLEEAYALLPLCAKEDIDTAIHYCKADLVSSVVNEFPELQGIMGRYYLQNASLSRAAALAIGEHLQHITLGSNISTTGALLSILDRIDNLLSCFILGLLPTSSHDPYALRRQSLEILTLLYTTQSSVDIEDLFARLIRHFPSSIPNTVWSPEEVLSKLNTFVWGRLRTILSSLGFDKEIIATVLTDNCPKNPLTIIQSAQSIQELKNTQILKTIAATHNRLKKILASLSFSVTEQMFSLQSAEDLLFKQALDRFVEETTALPISSKDYLHLLKELAQSTELFLDSVRVASDDESTRNQRIALLIAAQKCFGFYAWDVL</sequence>
<keyword id="KW-0030">Aminoacyl-tRNA synthetase</keyword>
<keyword id="KW-0067">ATP-binding</keyword>
<keyword id="KW-0963">Cytoplasm</keyword>
<keyword id="KW-0436">Ligase</keyword>
<keyword id="KW-0547">Nucleotide-binding</keyword>
<keyword id="KW-0648">Protein biosynthesis</keyword>
<gene>
    <name type="primary">glyQS</name>
    <name type="synonym">glyQ</name>
    <name type="synonym">glyS</name>
    <name type="ordered locus">CTL0165</name>
</gene>